<name>PROB_BURM1</name>
<evidence type="ECO:0000255" key="1">
    <source>
        <dbReference type="HAMAP-Rule" id="MF_00456"/>
    </source>
</evidence>
<organism>
    <name type="scientific">Burkholderia multivorans (strain ATCC 17616 / 249)</name>
    <dbReference type="NCBI Taxonomy" id="395019"/>
    <lineage>
        <taxon>Bacteria</taxon>
        <taxon>Pseudomonadati</taxon>
        <taxon>Pseudomonadota</taxon>
        <taxon>Betaproteobacteria</taxon>
        <taxon>Burkholderiales</taxon>
        <taxon>Burkholderiaceae</taxon>
        <taxon>Burkholderia</taxon>
        <taxon>Burkholderia cepacia complex</taxon>
    </lineage>
</organism>
<keyword id="KW-0028">Amino-acid biosynthesis</keyword>
<keyword id="KW-0067">ATP-binding</keyword>
<keyword id="KW-0963">Cytoplasm</keyword>
<keyword id="KW-0418">Kinase</keyword>
<keyword id="KW-0547">Nucleotide-binding</keyword>
<keyword id="KW-0641">Proline biosynthesis</keyword>
<keyword id="KW-1185">Reference proteome</keyword>
<keyword id="KW-0808">Transferase</keyword>
<reference key="1">
    <citation type="submission" date="2007-10" db="EMBL/GenBank/DDBJ databases">
        <title>Complete sequence of chromosome 1 of Burkholderia multivorans ATCC 17616.</title>
        <authorList>
            <person name="Copeland A."/>
            <person name="Lucas S."/>
            <person name="Lapidus A."/>
            <person name="Barry K."/>
            <person name="Glavina del Rio T."/>
            <person name="Dalin E."/>
            <person name="Tice H."/>
            <person name="Pitluck S."/>
            <person name="Chain P."/>
            <person name="Malfatti S."/>
            <person name="Shin M."/>
            <person name="Vergez L."/>
            <person name="Schmutz J."/>
            <person name="Larimer F."/>
            <person name="Land M."/>
            <person name="Hauser L."/>
            <person name="Kyrpides N."/>
            <person name="Kim E."/>
            <person name="Tiedje J."/>
            <person name="Richardson P."/>
        </authorList>
    </citation>
    <scope>NUCLEOTIDE SEQUENCE [LARGE SCALE GENOMIC DNA]</scope>
    <source>
        <strain>ATCC 17616 / 249</strain>
    </source>
</reference>
<reference key="2">
    <citation type="submission" date="2007-04" db="EMBL/GenBank/DDBJ databases">
        <title>Complete genome sequence of Burkholderia multivorans ATCC 17616.</title>
        <authorList>
            <person name="Ohtsubo Y."/>
            <person name="Yamashita A."/>
            <person name="Kurokawa K."/>
            <person name="Takami H."/>
            <person name="Yuhara S."/>
            <person name="Nishiyama E."/>
            <person name="Endo R."/>
            <person name="Miyazaki R."/>
            <person name="Ono A."/>
            <person name="Yano K."/>
            <person name="Ito M."/>
            <person name="Sota M."/>
            <person name="Yuji N."/>
            <person name="Hattori M."/>
            <person name="Tsuda M."/>
        </authorList>
    </citation>
    <scope>NUCLEOTIDE SEQUENCE [LARGE SCALE GENOMIC DNA]</scope>
    <source>
        <strain>ATCC 17616 / 249</strain>
    </source>
</reference>
<gene>
    <name evidence="1" type="primary">proB</name>
    <name type="ordered locus">Bmul_2799</name>
    <name type="ordered locus">BMULJ_00438</name>
</gene>
<comment type="function">
    <text evidence="1">Catalyzes the transfer of a phosphate group to glutamate to form L-glutamate 5-phosphate.</text>
</comment>
<comment type="catalytic activity">
    <reaction evidence="1">
        <text>L-glutamate + ATP = L-glutamyl 5-phosphate + ADP</text>
        <dbReference type="Rhea" id="RHEA:14877"/>
        <dbReference type="ChEBI" id="CHEBI:29985"/>
        <dbReference type="ChEBI" id="CHEBI:30616"/>
        <dbReference type="ChEBI" id="CHEBI:58274"/>
        <dbReference type="ChEBI" id="CHEBI:456216"/>
        <dbReference type="EC" id="2.7.2.11"/>
    </reaction>
</comment>
<comment type="pathway">
    <text evidence="1">Amino-acid biosynthesis; L-proline biosynthesis; L-glutamate 5-semialdehyde from L-glutamate: step 1/2.</text>
</comment>
<comment type="subcellular location">
    <subcellularLocation>
        <location evidence="1">Cytoplasm</location>
    </subcellularLocation>
</comment>
<comment type="similarity">
    <text evidence="1">Belongs to the glutamate 5-kinase family.</text>
</comment>
<feature type="chain" id="PRO_1000125219" description="Glutamate 5-kinase">
    <location>
        <begin position="1"/>
        <end position="372"/>
    </location>
</feature>
<feature type="domain" description="PUA" evidence="1">
    <location>
        <begin position="280"/>
        <end position="358"/>
    </location>
</feature>
<feature type="binding site" evidence="1">
    <location>
        <position position="14"/>
    </location>
    <ligand>
        <name>ATP</name>
        <dbReference type="ChEBI" id="CHEBI:30616"/>
    </ligand>
</feature>
<feature type="binding site" evidence="1">
    <location>
        <position position="54"/>
    </location>
    <ligand>
        <name>substrate</name>
    </ligand>
</feature>
<feature type="binding site" evidence="1">
    <location>
        <position position="141"/>
    </location>
    <ligand>
        <name>substrate</name>
    </ligand>
</feature>
<feature type="binding site" evidence="1">
    <location>
        <position position="153"/>
    </location>
    <ligand>
        <name>substrate</name>
    </ligand>
</feature>
<feature type="binding site" evidence="1">
    <location>
        <begin position="173"/>
        <end position="174"/>
    </location>
    <ligand>
        <name>ATP</name>
        <dbReference type="ChEBI" id="CHEBI:30616"/>
    </ligand>
</feature>
<protein>
    <recommendedName>
        <fullName evidence="1">Glutamate 5-kinase</fullName>
        <ecNumber evidence="1">2.7.2.11</ecNumber>
    </recommendedName>
    <alternativeName>
        <fullName evidence="1">Gamma-glutamyl kinase</fullName>
        <shortName evidence="1">GK</shortName>
    </alternativeName>
</protein>
<accession>A9AI59</accession>
<proteinExistence type="inferred from homology"/>
<dbReference type="EC" id="2.7.2.11" evidence="1"/>
<dbReference type="EMBL" id="CP000868">
    <property type="protein sequence ID" value="ABX16483.1"/>
    <property type="molecule type" value="Genomic_DNA"/>
</dbReference>
<dbReference type="EMBL" id="AP009385">
    <property type="protein sequence ID" value="BAG42405.1"/>
    <property type="molecule type" value="Genomic_DNA"/>
</dbReference>
<dbReference type="RefSeq" id="WP_006400417.1">
    <property type="nucleotide sequence ID" value="NC_010804.1"/>
</dbReference>
<dbReference type="SMR" id="A9AI59"/>
<dbReference type="STRING" id="395019.BMULJ_00438"/>
<dbReference type="GeneID" id="89568867"/>
<dbReference type="KEGG" id="bmj:BMULJ_00438"/>
<dbReference type="KEGG" id="bmu:Bmul_2799"/>
<dbReference type="eggNOG" id="COG0263">
    <property type="taxonomic scope" value="Bacteria"/>
</dbReference>
<dbReference type="HOGENOM" id="CLU_025400_2_0_4"/>
<dbReference type="UniPathway" id="UPA00098">
    <property type="reaction ID" value="UER00359"/>
</dbReference>
<dbReference type="Proteomes" id="UP000008815">
    <property type="component" value="Chromosome 1"/>
</dbReference>
<dbReference type="GO" id="GO:0005829">
    <property type="term" value="C:cytosol"/>
    <property type="evidence" value="ECO:0007669"/>
    <property type="project" value="TreeGrafter"/>
</dbReference>
<dbReference type="GO" id="GO:0005524">
    <property type="term" value="F:ATP binding"/>
    <property type="evidence" value="ECO:0007669"/>
    <property type="project" value="UniProtKB-KW"/>
</dbReference>
<dbReference type="GO" id="GO:0004349">
    <property type="term" value="F:glutamate 5-kinase activity"/>
    <property type="evidence" value="ECO:0007669"/>
    <property type="project" value="UniProtKB-UniRule"/>
</dbReference>
<dbReference type="GO" id="GO:0003723">
    <property type="term" value="F:RNA binding"/>
    <property type="evidence" value="ECO:0007669"/>
    <property type="project" value="InterPro"/>
</dbReference>
<dbReference type="GO" id="GO:0055129">
    <property type="term" value="P:L-proline biosynthetic process"/>
    <property type="evidence" value="ECO:0007669"/>
    <property type="project" value="UniProtKB-UniRule"/>
</dbReference>
<dbReference type="CDD" id="cd04242">
    <property type="entry name" value="AAK_G5K_ProB"/>
    <property type="match status" value="1"/>
</dbReference>
<dbReference type="CDD" id="cd21157">
    <property type="entry name" value="PUA_G5K"/>
    <property type="match status" value="1"/>
</dbReference>
<dbReference type="FunFam" id="2.30.130.10:FF:000007">
    <property type="entry name" value="Glutamate 5-kinase"/>
    <property type="match status" value="1"/>
</dbReference>
<dbReference type="FunFam" id="3.40.1160.10:FF:000018">
    <property type="entry name" value="Glutamate 5-kinase"/>
    <property type="match status" value="1"/>
</dbReference>
<dbReference type="Gene3D" id="3.40.1160.10">
    <property type="entry name" value="Acetylglutamate kinase-like"/>
    <property type="match status" value="1"/>
</dbReference>
<dbReference type="Gene3D" id="2.30.130.10">
    <property type="entry name" value="PUA domain"/>
    <property type="match status" value="1"/>
</dbReference>
<dbReference type="HAMAP" id="MF_00456">
    <property type="entry name" value="ProB"/>
    <property type="match status" value="1"/>
</dbReference>
<dbReference type="InterPro" id="IPR036393">
    <property type="entry name" value="AceGlu_kinase-like_sf"/>
</dbReference>
<dbReference type="InterPro" id="IPR001048">
    <property type="entry name" value="Asp/Glu/Uridylate_kinase"/>
</dbReference>
<dbReference type="InterPro" id="IPR041739">
    <property type="entry name" value="G5K_ProB"/>
</dbReference>
<dbReference type="InterPro" id="IPR001057">
    <property type="entry name" value="Glu/AcGlu_kinase"/>
</dbReference>
<dbReference type="InterPro" id="IPR011529">
    <property type="entry name" value="Glu_5kinase"/>
</dbReference>
<dbReference type="InterPro" id="IPR005715">
    <property type="entry name" value="Glu_5kinase/COase_Synthase"/>
</dbReference>
<dbReference type="InterPro" id="IPR019797">
    <property type="entry name" value="Glutamate_5-kinase_CS"/>
</dbReference>
<dbReference type="InterPro" id="IPR002478">
    <property type="entry name" value="PUA"/>
</dbReference>
<dbReference type="InterPro" id="IPR015947">
    <property type="entry name" value="PUA-like_sf"/>
</dbReference>
<dbReference type="InterPro" id="IPR036974">
    <property type="entry name" value="PUA_sf"/>
</dbReference>
<dbReference type="NCBIfam" id="TIGR01027">
    <property type="entry name" value="proB"/>
    <property type="match status" value="1"/>
</dbReference>
<dbReference type="PANTHER" id="PTHR43654">
    <property type="entry name" value="GLUTAMATE 5-KINASE"/>
    <property type="match status" value="1"/>
</dbReference>
<dbReference type="PANTHER" id="PTHR43654:SF1">
    <property type="entry name" value="ISOPENTENYL PHOSPHATE KINASE"/>
    <property type="match status" value="1"/>
</dbReference>
<dbReference type="Pfam" id="PF00696">
    <property type="entry name" value="AA_kinase"/>
    <property type="match status" value="1"/>
</dbReference>
<dbReference type="Pfam" id="PF01472">
    <property type="entry name" value="PUA"/>
    <property type="match status" value="1"/>
</dbReference>
<dbReference type="PIRSF" id="PIRSF000729">
    <property type="entry name" value="GK"/>
    <property type="match status" value="1"/>
</dbReference>
<dbReference type="PRINTS" id="PR00474">
    <property type="entry name" value="GLU5KINASE"/>
</dbReference>
<dbReference type="SMART" id="SM00359">
    <property type="entry name" value="PUA"/>
    <property type="match status" value="1"/>
</dbReference>
<dbReference type="SUPFAM" id="SSF53633">
    <property type="entry name" value="Carbamate kinase-like"/>
    <property type="match status" value="1"/>
</dbReference>
<dbReference type="SUPFAM" id="SSF88697">
    <property type="entry name" value="PUA domain-like"/>
    <property type="match status" value="1"/>
</dbReference>
<dbReference type="PROSITE" id="PS00902">
    <property type="entry name" value="GLUTAMATE_5_KINASE"/>
    <property type="match status" value="1"/>
</dbReference>
<dbReference type="PROSITE" id="PS50890">
    <property type="entry name" value="PUA"/>
    <property type="match status" value="1"/>
</dbReference>
<sequence length="372" mass="39169">MRSIIADSKRLVVKVGSSLVTNDGKGLDHAAIGRWAAQIAALRAQGKEVVLVSSGAIAEGMQRLGWSKRPREIDELQAAAAVGQMGLAQVYESRFTEHGIRTAQILLTHADLADRERYLNARSTLLTLLRLGVVPIINENDTVVTDEIKFGDNDTLGALVANLIEGDALIILTDQSGLFTADPRKDPAATLVAEANAGAPELEAMAGGAGSSLGRGGMLTKILAAKRAAHSGANTVIASGREPDVLVRLAGGEAIGTQLIARTARMAARKQWMADHLQVRGHVVIDAGAVEKLTAGGKSLLPIGVTDVQGAFARGEVIACVGPDGREVARGLTNYSSAETKLIHRKPSGEIESVLGYMLEPELIHRDNLVLV</sequence>